<feature type="chain" id="PRO_0000267740" description="3-hydroxydecanoyl-[acyl-carrier-protein] dehydratase">
    <location>
        <begin position="1"/>
        <end position="171"/>
    </location>
</feature>
<feature type="active site" evidence="1">
    <location>
        <position position="70"/>
    </location>
</feature>
<protein>
    <recommendedName>
        <fullName evidence="1">3-hydroxydecanoyl-[acyl-carrier-protein] dehydratase</fullName>
        <ecNumber evidence="1">4.2.1.59</ecNumber>
    </recommendedName>
    <alternativeName>
        <fullName evidence="1">3-hydroxyacyl-[acyl-carrier-protein] dehydratase FabA</fullName>
    </alternativeName>
    <alternativeName>
        <fullName evidence="1">Beta-hydroxydecanoyl thioester dehydrase</fullName>
    </alternativeName>
    <alternativeName>
        <fullName evidence="1">Trans-2-decenoyl-[acyl-carrier-protein] isomerase</fullName>
        <ecNumber evidence="1">5.3.3.14</ecNumber>
    </alternativeName>
</protein>
<proteinExistence type="inferred from homology"/>
<gene>
    <name evidence="1" type="primary">fabA</name>
    <name type="ordered locus">PSHAa1491</name>
</gene>
<reference key="1">
    <citation type="journal article" date="2005" name="Genome Res.">
        <title>Coping with cold: the genome of the versatile marine Antarctica bacterium Pseudoalteromonas haloplanktis TAC125.</title>
        <authorList>
            <person name="Medigue C."/>
            <person name="Krin E."/>
            <person name="Pascal G."/>
            <person name="Barbe V."/>
            <person name="Bernsel A."/>
            <person name="Bertin P.N."/>
            <person name="Cheung F."/>
            <person name="Cruveiller S."/>
            <person name="D'Amico S."/>
            <person name="Duilio A."/>
            <person name="Fang G."/>
            <person name="Feller G."/>
            <person name="Ho C."/>
            <person name="Mangenot S."/>
            <person name="Marino G."/>
            <person name="Nilsson J."/>
            <person name="Parrilli E."/>
            <person name="Rocha E.P.C."/>
            <person name="Rouy Z."/>
            <person name="Sekowska A."/>
            <person name="Tutino M.L."/>
            <person name="Vallenet D."/>
            <person name="von Heijne G."/>
            <person name="Danchin A."/>
        </authorList>
    </citation>
    <scope>NUCLEOTIDE SEQUENCE [LARGE SCALE GENOMIC DNA]</scope>
    <source>
        <strain>TAC 125</strain>
    </source>
</reference>
<dbReference type="EC" id="4.2.1.59" evidence="1"/>
<dbReference type="EC" id="5.3.3.14" evidence="1"/>
<dbReference type="EMBL" id="CR954246">
    <property type="protein sequence ID" value="CAI86566.1"/>
    <property type="molecule type" value="Genomic_DNA"/>
</dbReference>
<dbReference type="SMR" id="Q3IGG9"/>
<dbReference type="STRING" id="326442.PSHAa1491"/>
<dbReference type="KEGG" id="pha:PSHAa1491"/>
<dbReference type="PATRIC" id="fig|326442.8.peg.1444"/>
<dbReference type="eggNOG" id="COG0764">
    <property type="taxonomic scope" value="Bacteria"/>
</dbReference>
<dbReference type="HOGENOM" id="CLU_097925_0_0_6"/>
<dbReference type="BioCyc" id="PHAL326442:PSHA_RS07345-MONOMER"/>
<dbReference type="UniPathway" id="UPA00094"/>
<dbReference type="Proteomes" id="UP000006843">
    <property type="component" value="Chromosome I"/>
</dbReference>
<dbReference type="GO" id="GO:0005737">
    <property type="term" value="C:cytoplasm"/>
    <property type="evidence" value="ECO:0007669"/>
    <property type="project" value="UniProtKB-SubCell"/>
</dbReference>
<dbReference type="GO" id="GO:0019171">
    <property type="term" value="F:(3R)-hydroxyacyl-[acyl-carrier-protein] dehydratase activity"/>
    <property type="evidence" value="ECO:0007669"/>
    <property type="project" value="UniProtKB-UniRule"/>
</dbReference>
<dbReference type="GO" id="GO:0034017">
    <property type="term" value="F:trans-2-decenoyl-acyl-carrier-protein isomerase activity"/>
    <property type="evidence" value="ECO:0007669"/>
    <property type="project" value="UniProtKB-UniRule"/>
</dbReference>
<dbReference type="GO" id="GO:0006636">
    <property type="term" value="P:unsaturated fatty acid biosynthetic process"/>
    <property type="evidence" value="ECO:0007669"/>
    <property type="project" value="UniProtKB-UniRule"/>
</dbReference>
<dbReference type="CDD" id="cd01287">
    <property type="entry name" value="FabA"/>
    <property type="match status" value="1"/>
</dbReference>
<dbReference type="Gene3D" id="3.10.129.10">
    <property type="entry name" value="Hotdog Thioesterase"/>
    <property type="match status" value="1"/>
</dbReference>
<dbReference type="HAMAP" id="MF_00405">
    <property type="entry name" value="FabA"/>
    <property type="match status" value="1"/>
</dbReference>
<dbReference type="InterPro" id="IPR010083">
    <property type="entry name" value="FabA"/>
</dbReference>
<dbReference type="InterPro" id="IPR013114">
    <property type="entry name" value="FabA_FabZ"/>
</dbReference>
<dbReference type="InterPro" id="IPR029069">
    <property type="entry name" value="HotDog_dom_sf"/>
</dbReference>
<dbReference type="NCBIfam" id="TIGR01749">
    <property type="entry name" value="fabA"/>
    <property type="match status" value="1"/>
</dbReference>
<dbReference type="NCBIfam" id="NF003509">
    <property type="entry name" value="PRK05174.1"/>
    <property type="match status" value="1"/>
</dbReference>
<dbReference type="PANTHER" id="PTHR30272">
    <property type="entry name" value="3-HYDROXYACYL-[ACYL-CARRIER-PROTEIN] DEHYDRATASE"/>
    <property type="match status" value="1"/>
</dbReference>
<dbReference type="PANTHER" id="PTHR30272:SF8">
    <property type="entry name" value="3-HYDROXYDECANOYL-[ACYL-CARRIER-PROTEIN] DEHYDRATASE"/>
    <property type="match status" value="1"/>
</dbReference>
<dbReference type="Pfam" id="PF07977">
    <property type="entry name" value="FabA"/>
    <property type="match status" value="1"/>
</dbReference>
<dbReference type="SUPFAM" id="SSF54637">
    <property type="entry name" value="Thioesterase/thiol ester dehydrase-isomerase"/>
    <property type="match status" value="1"/>
</dbReference>
<comment type="function">
    <text evidence="1">Necessary for the introduction of cis unsaturation into fatty acids. Catalyzes the dehydration of (3R)-3-hydroxydecanoyl-ACP to E-(2)-decenoyl-ACP and then its isomerization to Z-(3)-decenoyl-ACP. Can catalyze the dehydratase reaction for beta-hydroxyacyl-ACPs with saturated chain lengths up to 16:0, being most active on intermediate chain length.</text>
</comment>
<comment type="catalytic activity">
    <reaction evidence="1">
        <text>a (3R)-hydroxyacyl-[ACP] = a (2E)-enoyl-[ACP] + H2O</text>
        <dbReference type="Rhea" id="RHEA:13097"/>
        <dbReference type="Rhea" id="RHEA-COMP:9925"/>
        <dbReference type="Rhea" id="RHEA-COMP:9945"/>
        <dbReference type="ChEBI" id="CHEBI:15377"/>
        <dbReference type="ChEBI" id="CHEBI:78784"/>
        <dbReference type="ChEBI" id="CHEBI:78827"/>
        <dbReference type="EC" id="4.2.1.59"/>
    </reaction>
</comment>
<comment type="catalytic activity">
    <reaction evidence="1">
        <text>(3R)-hydroxydecanoyl-[ACP] = (2E)-decenoyl-[ACP] + H2O</text>
        <dbReference type="Rhea" id="RHEA:41860"/>
        <dbReference type="Rhea" id="RHEA-COMP:9638"/>
        <dbReference type="Rhea" id="RHEA-COMP:9639"/>
        <dbReference type="ChEBI" id="CHEBI:15377"/>
        <dbReference type="ChEBI" id="CHEBI:78466"/>
        <dbReference type="ChEBI" id="CHEBI:78467"/>
    </reaction>
</comment>
<comment type="catalytic activity">
    <reaction evidence="1">
        <text>(2E)-decenoyl-[ACP] = (3Z)-decenoyl-[ACP]</text>
        <dbReference type="Rhea" id="RHEA:23568"/>
        <dbReference type="Rhea" id="RHEA-COMP:9639"/>
        <dbReference type="Rhea" id="RHEA-COMP:9927"/>
        <dbReference type="ChEBI" id="CHEBI:78467"/>
        <dbReference type="ChEBI" id="CHEBI:78798"/>
        <dbReference type="EC" id="5.3.3.14"/>
    </reaction>
</comment>
<comment type="pathway">
    <text evidence="1">Lipid metabolism; fatty acid biosynthesis.</text>
</comment>
<comment type="subunit">
    <text evidence="1">Homodimer.</text>
</comment>
<comment type="subcellular location">
    <subcellularLocation>
        <location evidence="1">Cytoplasm</location>
    </subcellularLocation>
</comment>
<comment type="similarity">
    <text evidence="1">Belongs to the thioester dehydratase family. FabA subfamily.</text>
</comment>
<accession>Q3IGG9</accession>
<sequence length="171" mass="18746">MEPKNSYTKEDLILCGEGKMFGEGNCRLPSDNMLMMDRITSITADGGIHGKGEIVAELDIDPSLWFFDCHFKGDPVMPGCLGLDAMWQLVGFYLGWSGGPGLGRALGVGEVKFTGQILPTAKKVTYRLVMKRVIKRKLFMGVADGTVEVDGRVIYEAKDLKVGLFQDTSAF</sequence>
<organism>
    <name type="scientific">Pseudoalteromonas translucida (strain TAC 125)</name>
    <dbReference type="NCBI Taxonomy" id="326442"/>
    <lineage>
        <taxon>Bacteria</taxon>
        <taxon>Pseudomonadati</taxon>
        <taxon>Pseudomonadota</taxon>
        <taxon>Gammaproteobacteria</taxon>
        <taxon>Alteromonadales</taxon>
        <taxon>Pseudoalteromonadaceae</taxon>
        <taxon>Pseudoalteromonas</taxon>
    </lineage>
</organism>
<keyword id="KW-0963">Cytoplasm</keyword>
<keyword id="KW-0275">Fatty acid biosynthesis</keyword>
<keyword id="KW-0276">Fatty acid metabolism</keyword>
<keyword id="KW-0413">Isomerase</keyword>
<keyword id="KW-0444">Lipid biosynthesis</keyword>
<keyword id="KW-0443">Lipid metabolism</keyword>
<keyword id="KW-0456">Lyase</keyword>
<keyword id="KW-1185">Reference proteome</keyword>
<name>FABA_PSET1</name>
<evidence type="ECO:0000255" key="1">
    <source>
        <dbReference type="HAMAP-Rule" id="MF_00405"/>
    </source>
</evidence>